<gene>
    <name evidence="1" type="primary">ribH</name>
    <name type="ordered locus">Sama_1019</name>
</gene>
<reference key="1">
    <citation type="submission" date="2006-12" db="EMBL/GenBank/DDBJ databases">
        <title>Complete sequence of Shewanella amazonensis SB2B.</title>
        <authorList>
            <consortium name="US DOE Joint Genome Institute"/>
            <person name="Copeland A."/>
            <person name="Lucas S."/>
            <person name="Lapidus A."/>
            <person name="Barry K."/>
            <person name="Detter J.C."/>
            <person name="Glavina del Rio T."/>
            <person name="Hammon N."/>
            <person name="Israni S."/>
            <person name="Dalin E."/>
            <person name="Tice H."/>
            <person name="Pitluck S."/>
            <person name="Munk A.C."/>
            <person name="Brettin T."/>
            <person name="Bruce D."/>
            <person name="Han C."/>
            <person name="Tapia R."/>
            <person name="Gilna P."/>
            <person name="Schmutz J."/>
            <person name="Larimer F."/>
            <person name="Land M."/>
            <person name="Hauser L."/>
            <person name="Kyrpides N."/>
            <person name="Mikhailova N."/>
            <person name="Fredrickson J."/>
            <person name="Richardson P."/>
        </authorList>
    </citation>
    <scope>NUCLEOTIDE SEQUENCE [LARGE SCALE GENOMIC DNA]</scope>
    <source>
        <strain>ATCC BAA-1098 / SB2B</strain>
    </source>
</reference>
<name>RISB_SHEAM</name>
<keyword id="KW-1185">Reference proteome</keyword>
<keyword id="KW-0686">Riboflavin biosynthesis</keyword>
<keyword id="KW-0808">Transferase</keyword>
<dbReference type="EC" id="2.5.1.78" evidence="1"/>
<dbReference type="EMBL" id="CP000507">
    <property type="protein sequence ID" value="ABL99226.1"/>
    <property type="molecule type" value="Genomic_DNA"/>
</dbReference>
<dbReference type="SMR" id="A1S4C0"/>
<dbReference type="STRING" id="326297.Sama_1019"/>
<dbReference type="KEGG" id="saz:Sama_1019"/>
<dbReference type="eggNOG" id="COG0054">
    <property type="taxonomic scope" value="Bacteria"/>
</dbReference>
<dbReference type="HOGENOM" id="CLU_089358_1_1_6"/>
<dbReference type="OrthoDB" id="9809709at2"/>
<dbReference type="UniPathway" id="UPA00275">
    <property type="reaction ID" value="UER00404"/>
</dbReference>
<dbReference type="Proteomes" id="UP000009175">
    <property type="component" value="Chromosome"/>
</dbReference>
<dbReference type="GO" id="GO:0005829">
    <property type="term" value="C:cytosol"/>
    <property type="evidence" value="ECO:0007669"/>
    <property type="project" value="TreeGrafter"/>
</dbReference>
<dbReference type="GO" id="GO:0009349">
    <property type="term" value="C:riboflavin synthase complex"/>
    <property type="evidence" value="ECO:0007669"/>
    <property type="project" value="InterPro"/>
</dbReference>
<dbReference type="GO" id="GO:0000906">
    <property type="term" value="F:6,7-dimethyl-8-ribityllumazine synthase activity"/>
    <property type="evidence" value="ECO:0007669"/>
    <property type="project" value="UniProtKB-UniRule"/>
</dbReference>
<dbReference type="GO" id="GO:0009231">
    <property type="term" value="P:riboflavin biosynthetic process"/>
    <property type="evidence" value="ECO:0007669"/>
    <property type="project" value="UniProtKB-UniRule"/>
</dbReference>
<dbReference type="CDD" id="cd09209">
    <property type="entry name" value="Lumazine_synthase-I"/>
    <property type="match status" value="1"/>
</dbReference>
<dbReference type="FunFam" id="3.40.50.960:FF:000001">
    <property type="entry name" value="6,7-dimethyl-8-ribityllumazine synthase"/>
    <property type="match status" value="1"/>
</dbReference>
<dbReference type="Gene3D" id="3.40.50.960">
    <property type="entry name" value="Lumazine/riboflavin synthase"/>
    <property type="match status" value="1"/>
</dbReference>
<dbReference type="HAMAP" id="MF_00178">
    <property type="entry name" value="Lumazine_synth"/>
    <property type="match status" value="1"/>
</dbReference>
<dbReference type="InterPro" id="IPR034964">
    <property type="entry name" value="LS"/>
</dbReference>
<dbReference type="InterPro" id="IPR002180">
    <property type="entry name" value="LS/RS"/>
</dbReference>
<dbReference type="InterPro" id="IPR036467">
    <property type="entry name" value="LS/RS_sf"/>
</dbReference>
<dbReference type="NCBIfam" id="TIGR00114">
    <property type="entry name" value="lumazine-synth"/>
    <property type="match status" value="1"/>
</dbReference>
<dbReference type="NCBIfam" id="NF000812">
    <property type="entry name" value="PRK00061.1-4"/>
    <property type="match status" value="1"/>
</dbReference>
<dbReference type="PANTHER" id="PTHR21058:SF0">
    <property type="entry name" value="6,7-DIMETHYL-8-RIBITYLLUMAZINE SYNTHASE"/>
    <property type="match status" value="1"/>
</dbReference>
<dbReference type="PANTHER" id="PTHR21058">
    <property type="entry name" value="6,7-DIMETHYL-8-RIBITYLLUMAZINE SYNTHASE DMRL SYNTHASE LUMAZINE SYNTHASE"/>
    <property type="match status" value="1"/>
</dbReference>
<dbReference type="Pfam" id="PF00885">
    <property type="entry name" value="DMRL_synthase"/>
    <property type="match status" value="1"/>
</dbReference>
<dbReference type="SUPFAM" id="SSF52121">
    <property type="entry name" value="Lumazine synthase"/>
    <property type="match status" value="1"/>
</dbReference>
<sequence>MHIVEGHIEAKSAKVAIVVSRFNSFVVESLLSGAIDTLKRFGQVSEDNITVVRVPGAFELPLAAKKVAASGKFDGIIALGAVIRGGTPHFDFVAGECNKGLAQVSLEFNTPVSFGVLTTDTIEQAIERSGTKAGNKGGEAALGLLEMVNVLNAIDKEL</sequence>
<protein>
    <recommendedName>
        <fullName evidence="1">6,7-dimethyl-8-ribityllumazine synthase</fullName>
        <shortName evidence="1">DMRL synthase</shortName>
        <shortName evidence="1">LS</shortName>
        <shortName evidence="1">Lumazine synthase</shortName>
        <ecNumber evidence="1">2.5.1.78</ecNumber>
    </recommendedName>
</protein>
<accession>A1S4C0</accession>
<comment type="function">
    <text evidence="1">Catalyzes the formation of 6,7-dimethyl-8-ribityllumazine by condensation of 5-amino-6-(D-ribitylamino)uracil with 3,4-dihydroxy-2-butanone 4-phosphate. This is the penultimate step in the biosynthesis of riboflavin.</text>
</comment>
<comment type="catalytic activity">
    <reaction evidence="1">
        <text>(2S)-2-hydroxy-3-oxobutyl phosphate + 5-amino-6-(D-ribitylamino)uracil = 6,7-dimethyl-8-(1-D-ribityl)lumazine + phosphate + 2 H2O + H(+)</text>
        <dbReference type="Rhea" id="RHEA:26152"/>
        <dbReference type="ChEBI" id="CHEBI:15377"/>
        <dbReference type="ChEBI" id="CHEBI:15378"/>
        <dbReference type="ChEBI" id="CHEBI:15934"/>
        <dbReference type="ChEBI" id="CHEBI:43474"/>
        <dbReference type="ChEBI" id="CHEBI:58201"/>
        <dbReference type="ChEBI" id="CHEBI:58830"/>
        <dbReference type="EC" id="2.5.1.78"/>
    </reaction>
</comment>
<comment type="pathway">
    <text evidence="1">Cofactor biosynthesis; riboflavin biosynthesis; riboflavin from 2-hydroxy-3-oxobutyl phosphate and 5-amino-6-(D-ribitylamino)uracil: step 1/2.</text>
</comment>
<comment type="subunit">
    <text evidence="1">Forms an icosahedral capsid composed of 60 subunits, arranged as a dodecamer of pentamers.</text>
</comment>
<comment type="similarity">
    <text evidence="1">Belongs to the DMRL synthase family.</text>
</comment>
<evidence type="ECO:0000255" key="1">
    <source>
        <dbReference type="HAMAP-Rule" id="MF_00178"/>
    </source>
</evidence>
<feature type="chain" id="PRO_1000040506" description="6,7-dimethyl-8-ribityllumazine synthase">
    <location>
        <begin position="1"/>
        <end position="158"/>
    </location>
</feature>
<feature type="active site" description="Proton donor" evidence="1">
    <location>
        <position position="89"/>
    </location>
</feature>
<feature type="binding site" evidence="1">
    <location>
        <position position="22"/>
    </location>
    <ligand>
        <name>5-amino-6-(D-ribitylamino)uracil</name>
        <dbReference type="ChEBI" id="CHEBI:15934"/>
    </ligand>
</feature>
<feature type="binding site" evidence="1">
    <location>
        <begin position="57"/>
        <end position="59"/>
    </location>
    <ligand>
        <name>5-amino-6-(D-ribitylamino)uracil</name>
        <dbReference type="ChEBI" id="CHEBI:15934"/>
    </ligand>
</feature>
<feature type="binding site" evidence="1">
    <location>
        <begin position="81"/>
        <end position="83"/>
    </location>
    <ligand>
        <name>5-amino-6-(D-ribitylamino)uracil</name>
        <dbReference type="ChEBI" id="CHEBI:15934"/>
    </ligand>
</feature>
<feature type="binding site" evidence="1">
    <location>
        <begin position="86"/>
        <end position="87"/>
    </location>
    <ligand>
        <name>(2S)-2-hydroxy-3-oxobutyl phosphate</name>
        <dbReference type="ChEBI" id="CHEBI:58830"/>
    </ligand>
</feature>
<feature type="binding site" evidence="1">
    <location>
        <position position="114"/>
    </location>
    <ligand>
        <name>5-amino-6-(D-ribitylamino)uracil</name>
        <dbReference type="ChEBI" id="CHEBI:15934"/>
    </ligand>
</feature>
<feature type="binding site" evidence="1">
    <location>
        <position position="128"/>
    </location>
    <ligand>
        <name>(2S)-2-hydroxy-3-oxobutyl phosphate</name>
        <dbReference type="ChEBI" id="CHEBI:58830"/>
    </ligand>
</feature>
<proteinExistence type="inferred from homology"/>
<organism>
    <name type="scientific">Shewanella amazonensis (strain ATCC BAA-1098 / SB2B)</name>
    <dbReference type="NCBI Taxonomy" id="326297"/>
    <lineage>
        <taxon>Bacteria</taxon>
        <taxon>Pseudomonadati</taxon>
        <taxon>Pseudomonadota</taxon>
        <taxon>Gammaproteobacteria</taxon>
        <taxon>Alteromonadales</taxon>
        <taxon>Shewanellaceae</taxon>
        <taxon>Shewanella</taxon>
    </lineage>
</organism>